<feature type="chain" id="PRO_1000012095" description="Bis(5'-nucleosyl)-tetraphosphatase, symmetrical">
    <location>
        <begin position="1"/>
        <end position="274"/>
    </location>
</feature>
<dbReference type="EC" id="3.6.1.41" evidence="1"/>
<dbReference type="EMBL" id="CP000444">
    <property type="protein sequence ID" value="ABI44101.1"/>
    <property type="molecule type" value="Genomic_DNA"/>
</dbReference>
<dbReference type="SMR" id="Q0HS04"/>
<dbReference type="KEGG" id="shm:Shewmr7_3117"/>
<dbReference type="HOGENOM" id="CLU_056184_2_0_6"/>
<dbReference type="GO" id="GO:0005737">
    <property type="term" value="C:cytoplasm"/>
    <property type="evidence" value="ECO:0007669"/>
    <property type="project" value="TreeGrafter"/>
</dbReference>
<dbReference type="GO" id="GO:0008803">
    <property type="term" value="F:bis(5'-nucleosyl)-tetraphosphatase (symmetrical) activity"/>
    <property type="evidence" value="ECO:0007669"/>
    <property type="project" value="UniProtKB-UniRule"/>
</dbReference>
<dbReference type="GO" id="GO:0016791">
    <property type="term" value="F:phosphatase activity"/>
    <property type="evidence" value="ECO:0007669"/>
    <property type="project" value="TreeGrafter"/>
</dbReference>
<dbReference type="GO" id="GO:0110154">
    <property type="term" value="P:RNA decapping"/>
    <property type="evidence" value="ECO:0007669"/>
    <property type="project" value="TreeGrafter"/>
</dbReference>
<dbReference type="CDD" id="cd07422">
    <property type="entry name" value="MPP_ApaH"/>
    <property type="match status" value="1"/>
</dbReference>
<dbReference type="Gene3D" id="3.60.21.10">
    <property type="match status" value="1"/>
</dbReference>
<dbReference type="HAMAP" id="MF_00199">
    <property type="entry name" value="ApaH"/>
    <property type="match status" value="1"/>
</dbReference>
<dbReference type="InterPro" id="IPR050126">
    <property type="entry name" value="Ap4A_hydrolase"/>
</dbReference>
<dbReference type="InterPro" id="IPR004617">
    <property type="entry name" value="ApaH"/>
</dbReference>
<dbReference type="InterPro" id="IPR004843">
    <property type="entry name" value="Calcineurin-like_PHP_ApaH"/>
</dbReference>
<dbReference type="InterPro" id="IPR029052">
    <property type="entry name" value="Metallo-depent_PP-like"/>
</dbReference>
<dbReference type="NCBIfam" id="TIGR00668">
    <property type="entry name" value="apaH"/>
    <property type="match status" value="1"/>
</dbReference>
<dbReference type="NCBIfam" id="NF001204">
    <property type="entry name" value="PRK00166.1"/>
    <property type="match status" value="1"/>
</dbReference>
<dbReference type="PANTHER" id="PTHR42850:SF11">
    <property type="entry name" value="BIS(5'-NUCLEOSYL)-TETRAPHOSPHATASE [SYMMETRICAL]"/>
    <property type="match status" value="1"/>
</dbReference>
<dbReference type="PANTHER" id="PTHR42850">
    <property type="entry name" value="METALLOPHOSPHOESTERASE"/>
    <property type="match status" value="1"/>
</dbReference>
<dbReference type="Pfam" id="PF00149">
    <property type="entry name" value="Metallophos"/>
    <property type="match status" value="1"/>
</dbReference>
<dbReference type="PIRSF" id="PIRSF000903">
    <property type="entry name" value="B5n-ttraPtase_sm"/>
    <property type="match status" value="1"/>
</dbReference>
<dbReference type="SUPFAM" id="SSF56300">
    <property type="entry name" value="Metallo-dependent phosphatases"/>
    <property type="match status" value="1"/>
</dbReference>
<sequence length="274" mass="31203">MAHYFVGDVQGCFAELKRLLAEVDFNPSRDELWAVGDLVARGPDSLATLRYFQSLGDAGKTVLGNHDLHLLALHGKLKRDKPSDNLAPLLNAPDIASLIDWLRQQPLMRELPEHKVIMTHAGVPPQWSLDVLRQESQLVSQALKQSDYLEALISQMYSDTAERWDPSAIGLNRLRFCINALTRMRYLYVDGHLDFDCKQPPEDCSNPQLRPWFEFTSALRQSHTLVFGHWAALMGKVNDPKLKALDTGCCWGEYLTLWHLEKDQKITQKKLKKG</sequence>
<evidence type="ECO:0000255" key="1">
    <source>
        <dbReference type="HAMAP-Rule" id="MF_00199"/>
    </source>
</evidence>
<accession>Q0HS04</accession>
<protein>
    <recommendedName>
        <fullName evidence="1">Bis(5'-nucleosyl)-tetraphosphatase, symmetrical</fullName>
        <ecNumber evidence="1">3.6.1.41</ecNumber>
    </recommendedName>
    <alternativeName>
        <fullName evidence="1">Ap4A hydrolase</fullName>
    </alternativeName>
    <alternativeName>
        <fullName evidence="1">Diadenosine 5',5'''-P1,P4-tetraphosphate pyrophosphohydrolase</fullName>
    </alternativeName>
    <alternativeName>
        <fullName evidence="1">Diadenosine tetraphosphatase</fullName>
    </alternativeName>
</protein>
<organism>
    <name type="scientific">Shewanella sp. (strain MR-7)</name>
    <dbReference type="NCBI Taxonomy" id="60481"/>
    <lineage>
        <taxon>Bacteria</taxon>
        <taxon>Pseudomonadati</taxon>
        <taxon>Pseudomonadota</taxon>
        <taxon>Gammaproteobacteria</taxon>
        <taxon>Alteromonadales</taxon>
        <taxon>Shewanellaceae</taxon>
        <taxon>Shewanella</taxon>
    </lineage>
</organism>
<proteinExistence type="inferred from homology"/>
<gene>
    <name evidence="1" type="primary">apaH</name>
    <name type="ordered locus">Shewmr7_3117</name>
</gene>
<name>APAH_SHESR</name>
<reference key="1">
    <citation type="submission" date="2006-08" db="EMBL/GenBank/DDBJ databases">
        <title>Complete sequence of chromosome 1 of Shewanella sp. MR-7.</title>
        <authorList>
            <person name="Copeland A."/>
            <person name="Lucas S."/>
            <person name="Lapidus A."/>
            <person name="Barry K."/>
            <person name="Detter J.C."/>
            <person name="Glavina del Rio T."/>
            <person name="Hammon N."/>
            <person name="Israni S."/>
            <person name="Dalin E."/>
            <person name="Tice H."/>
            <person name="Pitluck S."/>
            <person name="Kiss H."/>
            <person name="Brettin T."/>
            <person name="Bruce D."/>
            <person name="Han C."/>
            <person name="Tapia R."/>
            <person name="Gilna P."/>
            <person name="Schmutz J."/>
            <person name="Larimer F."/>
            <person name="Land M."/>
            <person name="Hauser L."/>
            <person name="Kyrpides N."/>
            <person name="Mikhailova N."/>
            <person name="Nealson K."/>
            <person name="Konstantinidis K."/>
            <person name="Klappenbach J."/>
            <person name="Tiedje J."/>
            <person name="Richardson P."/>
        </authorList>
    </citation>
    <scope>NUCLEOTIDE SEQUENCE [LARGE SCALE GENOMIC DNA]</scope>
    <source>
        <strain>MR-7</strain>
    </source>
</reference>
<keyword id="KW-0378">Hydrolase</keyword>
<comment type="function">
    <text evidence="1">Hydrolyzes diadenosine 5',5'''-P1,P4-tetraphosphate to yield ADP.</text>
</comment>
<comment type="catalytic activity">
    <reaction evidence="1">
        <text>P(1),P(4)-bis(5'-adenosyl) tetraphosphate + H2O = 2 ADP + 2 H(+)</text>
        <dbReference type="Rhea" id="RHEA:24252"/>
        <dbReference type="ChEBI" id="CHEBI:15377"/>
        <dbReference type="ChEBI" id="CHEBI:15378"/>
        <dbReference type="ChEBI" id="CHEBI:58141"/>
        <dbReference type="ChEBI" id="CHEBI:456216"/>
        <dbReference type="EC" id="3.6.1.41"/>
    </reaction>
</comment>
<comment type="similarity">
    <text evidence="1">Belongs to the Ap4A hydrolase family.</text>
</comment>